<proteinExistence type="inferred from homology"/>
<evidence type="ECO:0000255" key="1">
    <source>
        <dbReference type="HAMAP-Rule" id="MF_00005"/>
    </source>
</evidence>
<accession>Q186Z6</accession>
<feature type="chain" id="PRO_0000263913" description="Argininosuccinate synthase">
    <location>
        <begin position="1"/>
        <end position="399"/>
    </location>
</feature>
<feature type="binding site" evidence="1">
    <location>
        <begin position="8"/>
        <end position="16"/>
    </location>
    <ligand>
        <name>ATP</name>
        <dbReference type="ChEBI" id="CHEBI:30616"/>
    </ligand>
</feature>
<feature type="binding site" evidence="1">
    <location>
        <position position="87"/>
    </location>
    <ligand>
        <name>L-citrulline</name>
        <dbReference type="ChEBI" id="CHEBI:57743"/>
    </ligand>
</feature>
<feature type="binding site" evidence="1">
    <location>
        <position position="92"/>
    </location>
    <ligand>
        <name>L-citrulline</name>
        <dbReference type="ChEBI" id="CHEBI:57743"/>
    </ligand>
</feature>
<feature type="binding site" evidence="1">
    <location>
        <position position="117"/>
    </location>
    <ligand>
        <name>ATP</name>
        <dbReference type="ChEBI" id="CHEBI:30616"/>
    </ligand>
</feature>
<feature type="binding site" evidence="1">
    <location>
        <position position="119"/>
    </location>
    <ligand>
        <name>L-aspartate</name>
        <dbReference type="ChEBI" id="CHEBI:29991"/>
    </ligand>
</feature>
<feature type="binding site" evidence="1">
    <location>
        <position position="123"/>
    </location>
    <ligand>
        <name>L-aspartate</name>
        <dbReference type="ChEBI" id="CHEBI:29991"/>
    </ligand>
</feature>
<feature type="binding site" evidence="1">
    <location>
        <position position="123"/>
    </location>
    <ligand>
        <name>L-citrulline</name>
        <dbReference type="ChEBI" id="CHEBI:57743"/>
    </ligand>
</feature>
<feature type="binding site" evidence="1">
    <location>
        <position position="124"/>
    </location>
    <ligand>
        <name>L-aspartate</name>
        <dbReference type="ChEBI" id="CHEBI:29991"/>
    </ligand>
</feature>
<feature type="binding site" evidence="1">
    <location>
        <position position="127"/>
    </location>
    <ligand>
        <name>L-citrulline</name>
        <dbReference type="ChEBI" id="CHEBI:57743"/>
    </ligand>
</feature>
<feature type="binding site" evidence="1">
    <location>
        <position position="176"/>
    </location>
    <ligand>
        <name>L-citrulline</name>
        <dbReference type="ChEBI" id="CHEBI:57743"/>
    </ligand>
</feature>
<feature type="binding site" evidence="1">
    <location>
        <position position="185"/>
    </location>
    <ligand>
        <name>L-citrulline</name>
        <dbReference type="ChEBI" id="CHEBI:57743"/>
    </ligand>
</feature>
<feature type="binding site" evidence="1">
    <location>
        <position position="261"/>
    </location>
    <ligand>
        <name>L-citrulline</name>
        <dbReference type="ChEBI" id="CHEBI:57743"/>
    </ligand>
</feature>
<feature type="binding site" evidence="1">
    <location>
        <position position="273"/>
    </location>
    <ligand>
        <name>L-citrulline</name>
        <dbReference type="ChEBI" id="CHEBI:57743"/>
    </ligand>
</feature>
<sequence length="399" mass="44624">MKEKVVLAYSGGLDTSIIIPWLKENYEDIDVIAVCGNVGQEDKMEDVYEKALQSGASKAYVDDISEEFVTETIFKAVKAEAKYEGKYLLGTSLARPIIAKKLVEVAHKEGAKYICHGCTGKGNDQVRFEATIAALDPTIKVIAPWRIWDIKSREDAIDYAEKHNIKVTATKAKIYSVDANLWHVSTEGGDIEHLENEHKKDVYKQCVDPEDACDVAEYVEVYFEKGVPKKVNGEELSPVALIHKLNELGCKHGIGVIDIVENRLVGMKSRGIYETPGGTILYEAHNILESATLDKDTLHFKQMVSYKYGELIYNGLWYCKLRESIDAFMEQTQDNVTGTVKVKLYKGNIKPAGIFTENALYDEGISSFGNSELYDHKDAEGFINLFTLPLKIRAMKAGK</sequence>
<name>ASSY_CLOD6</name>
<protein>
    <recommendedName>
        <fullName evidence="1">Argininosuccinate synthase</fullName>
        <ecNumber evidence="1">6.3.4.5</ecNumber>
    </recommendedName>
    <alternativeName>
        <fullName evidence="1">Citrulline--aspartate ligase</fullName>
    </alternativeName>
</protein>
<comment type="catalytic activity">
    <reaction evidence="1">
        <text>L-citrulline + L-aspartate + ATP = 2-(N(omega)-L-arginino)succinate + AMP + diphosphate + H(+)</text>
        <dbReference type="Rhea" id="RHEA:10932"/>
        <dbReference type="ChEBI" id="CHEBI:15378"/>
        <dbReference type="ChEBI" id="CHEBI:29991"/>
        <dbReference type="ChEBI" id="CHEBI:30616"/>
        <dbReference type="ChEBI" id="CHEBI:33019"/>
        <dbReference type="ChEBI" id="CHEBI:57472"/>
        <dbReference type="ChEBI" id="CHEBI:57743"/>
        <dbReference type="ChEBI" id="CHEBI:456215"/>
        <dbReference type="EC" id="6.3.4.5"/>
    </reaction>
</comment>
<comment type="pathway">
    <text evidence="1">Amino-acid biosynthesis; L-arginine biosynthesis; L-arginine from L-ornithine and carbamoyl phosphate: step 2/3.</text>
</comment>
<comment type="subunit">
    <text evidence="1">Homotetramer.</text>
</comment>
<comment type="subcellular location">
    <subcellularLocation>
        <location evidence="1">Cytoplasm</location>
    </subcellularLocation>
</comment>
<comment type="similarity">
    <text evidence="1">Belongs to the argininosuccinate synthase family. Type 1 subfamily.</text>
</comment>
<organism>
    <name type="scientific">Clostridioides difficile (strain 630)</name>
    <name type="common">Peptoclostridium difficile</name>
    <dbReference type="NCBI Taxonomy" id="272563"/>
    <lineage>
        <taxon>Bacteria</taxon>
        <taxon>Bacillati</taxon>
        <taxon>Bacillota</taxon>
        <taxon>Clostridia</taxon>
        <taxon>Peptostreptococcales</taxon>
        <taxon>Peptostreptococcaceae</taxon>
        <taxon>Clostridioides</taxon>
    </lineage>
</organism>
<keyword id="KW-0028">Amino-acid biosynthesis</keyword>
<keyword id="KW-0055">Arginine biosynthesis</keyword>
<keyword id="KW-0067">ATP-binding</keyword>
<keyword id="KW-0963">Cytoplasm</keyword>
<keyword id="KW-0436">Ligase</keyword>
<keyword id="KW-0547">Nucleotide-binding</keyword>
<keyword id="KW-1185">Reference proteome</keyword>
<dbReference type="EC" id="6.3.4.5" evidence="1"/>
<dbReference type="EMBL" id="AM180355">
    <property type="protein sequence ID" value="CAJ68655.1"/>
    <property type="molecule type" value="Genomic_DNA"/>
</dbReference>
<dbReference type="RefSeq" id="WP_003439524.1">
    <property type="nucleotide sequence ID" value="NZ_JAUPES010000026.1"/>
</dbReference>
<dbReference type="RefSeq" id="YP_001088291.1">
    <property type="nucleotide sequence ID" value="NC_009089.1"/>
</dbReference>
<dbReference type="SMR" id="Q186Z6"/>
<dbReference type="STRING" id="272563.CD630_17850"/>
<dbReference type="EnsemblBacteria" id="CAJ68655">
    <property type="protein sequence ID" value="CAJ68655"/>
    <property type="gene ID" value="CD630_17850"/>
</dbReference>
<dbReference type="KEGG" id="cdf:CD630_17850"/>
<dbReference type="KEGG" id="pdc:CDIF630_01984"/>
<dbReference type="PATRIC" id="fig|272563.120.peg.1878"/>
<dbReference type="eggNOG" id="COG0137">
    <property type="taxonomic scope" value="Bacteria"/>
</dbReference>
<dbReference type="OrthoDB" id="9801641at2"/>
<dbReference type="PhylomeDB" id="Q186Z6"/>
<dbReference type="BioCyc" id="PDIF272563:G12WB-1932-MONOMER"/>
<dbReference type="UniPathway" id="UPA00068">
    <property type="reaction ID" value="UER00113"/>
</dbReference>
<dbReference type="Proteomes" id="UP000001978">
    <property type="component" value="Chromosome"/>
</dbReference>
<dbReference type="GO" id="GO:0005737">
    <property type="term" value="C:cytoplasm"/>
    <property type="evidence" value="ECO:0007669"/>
    <property type="project" value="UniProtKB-SubCell"/>
</dbReference>
<dbReference type="GO" id="GO:0004055">
    <property type="term" value="F:argininosuccinate synthase activity"/>
    <property type="evidence" value="ECO:0007669"/>
    <property type="project" value="UniProtKB-UniRule"/>
</dbReference>
<dbReference type="GO" id="GO:0005524">
    <property type="term" value="F:ATP binding"/>
    <property type="evidence" value="ECO:0007669"/>
    <property type="project" value="UniProtKB-UniRule"/>
</dbReference>
<dbReference type="GO" id="GO:0000053">
    <property type="term" value="P:argininosuccinate metabolic process"/>
    <property type="evidence" value="ECO:0007669"/>
    <property type="project" value="TreeGrafter"/>
</dbReference>
<dbReference type="GO" id="GO:0006526">
    <property type="term" value="P:L-arginine biosynthetic process"/>
    <property type="evidence" value="ECO:0007669"/>
    <property type="project" value="UniProtKB-UniRule"/>
</dbReference>
<dbReference type="GO" id="GO:0000050">
    <property type="term" value="P:urea cycle"/>
    <property type="evidence" value="ECO:0007669"/>
    <property type="project" value="TreeGrafter"/>
</dbReference>
<dbReference type="CDD" id="cd01999">
    <property type="entry name" value="ASS"/>
    <property type="match status" value="1"/>
</dbReference>
<dbReference type="FunFam" id="3.40.50.620:FF:000019">
    <property type="entry name" value="Argininosuccinate synthase"/>
    <property type="match status" value="1"/>
</dbReference>
<dbReference type="FunFam" id="3.90.1260.10:FF:000007">
    <property type="entry name" value="Argininosuccinate synthase"/>
    <property type="match status" value="1"/>
</dbReference>
<dbReference type="Gene3D" id="3.90.1260.10">
    <property type="entry name" value="Argininosuccinate synthetase, chain A, domain 2"/>
    <property type="match status" value="1"/>
</dbReference>
<dbReference type="Gene3D" id="3.40.50.620">
    <property type="entry name" value="HUPs"/>
    <property type="match status" value="1"/>
</dbReference>
<dbReference type="Gene3D" id="1.20.5.470">
    <property type="entry name" value="Single helix bin"/>
    <property type="match status" value="1"/>
</dbReference>
<dbReference type="HAMAP" id="MF_00005">
    <property type="entry name" value="Arg_succ_synth_type1"/>
    <property type="match status" value="1"/>
</dbReference>
<dbReference type="InterPro" id="IPR048268">
    <property type="entry name" value="Arginosuc_syn_C"/>
</dbReference>
<dbReference type="InterPro" id="IPR048267">
    <property type="entry name" value="Arginosuc_syn_N"/>
</dbReference>
<dbReference type="InterPro" id="IPR001518">
    <property type="entry name" value="Arginosuc_synth"/>
</dbReference>
<dbReference type="InterPro" id="IPR018223">
    <property type="entry name" value="Arginosuc_synth_CS"/>
</dbReference>
<dbReference type="InterPro" id="IPR023434">
    <property type="entry name" value="Arginosuc_synth_type_1_subfam"/>
</dbReference>
<dbReference type="InterPro" id="IPR024074">
    <property type="entry name" value="AS_cat/multimer_dom_body"/>
</dbReference>
<dbReference type="InterPro" id="IPR014729">
    <property type="entry name" value="Rossmann-like_a/b/a_fold"/>
</dbReference>
<dbReference type="NCBIfam" id="TIGR00032">
    <property type="entry name" value="argG"/>
    <property type="match status" value="1"/>
</dbReference>
<dbReference type="NCBIfam" id="NF001770">
    <property type="entry name" value="PRK00509.1"/>
    <property type="match status" value="1"/>
</dbReference>
<dbReference type="PANTHER" id="PTHR11587">
    <property type="entry name" value="ARGININOSUCCINATE SYNTHASE"/>
    <property type="match status" value="1"/>
</dbReference>
<dbReference type="PANTHER" id="PTHR11587:SF2">
    <property type="entry name" value="ARGININOSUCCINATE SYNTHASE"/>
    <property type="match status" value="1"/>
</dbReference>
<dbReference type="Pfam" id="PF20979">
    <property type="entry name" value="Arginosuc_syn_C"/>
    <property type="match status" value="1"/>
</dbReference>
<dbReference type="Pfam" id="PF00764">
    <property type="entry name" value="Arginosuc_synth"/>
    <property type="match status" value="1"/>
</dbReference>
<dbReference type="SUPFAM" id="SSF52402">
    <property type="entry name" value="Adenine nucleotide alpha hydrolases-like"/>
    <property type="match status" value="1"/>
</dbReference>
<dbReference type="SUPFAM" id="SSF69864">
    <property type="entry name" value="Argininosuccinate synthetase, C-terminal domain"/>
    <property type="match status" value="1"/>
</dbReference>
<dbReference type="PROSITE" id="PS00564">
    <property type="entry name" value="ARGININOSUCCIN_SYN_1"/>
    <property type="match status" value="1"/>
</dbReference>
<dbReference type="PROSITE" id="PS00565">
    <property type="entry name" value="ARGININOSUCCIN_SYN_2"/>
    <property type="match status" value="1"/>
</dbReference>
<gene>
    <name evidence="1" type="primary">argG</name>
    <name type="ordered locus">CD630_17850</name>
</gene>
<reference key="1">
    <citation type="journal article" date="2006" name="Nat. Genet.">
        <title>The multidrug-resistant human pathogen Clostridium difficile has a highly mobile, mosaic genome.</title>
        <authorList>
            <person name="Sebaihia M."/>
            <person name="Wren B.W."/>
            <person name="Mullany P."/>
            <person name="Fairweather N.F."/>
            <person name="Minton N."/>
            <person name="Stabler R."/>
            <person name="Thomson N.R."/>
            <person name="Roberts A.P."/>
            <person name="Cerdeno-Tarraga A.M."/>
            <person name="Wang H."/>
            <person name="Holden M.T.G."/>
            <person name="Wright A."/>
            <person name="Churcher C."/>
            <person name="Quail M.A."/>
            <person name="Baker S."/>
            <person name="Bason N."/>
            <person name="Brooks K."/>
            <person name="Chillingworth T."/>
            <person name="Cronin A."/>
            <person name="Davis P."/>
            <person name="Dowd L."/>
            <person name="Fraser A."/>
            <person name="Feltwell T."/>
            <person name="Hance Z."/>
            <person name="Holroyd S."/>
            <person name="Jagels K."/>
            <person name="Moule S."/>
            <person name="Mungall K."/>
            <person name="Price C."/>
            <person name="Rabbinowitsch E."/>
            <person name="Sharp S."/>
            <person name="Simmonds M."/>
            <person name="Stevens K."/>
            <person name="Unwin L."/>
            <person name="Whithead S."/>
            <person name="Dupuy B."/>
            <person name="Dougan G."/>
            <person name="Barrell B."/>
            <person name="Parkhill J."/>
        </authorList>
    </citation>
    <scope>NUCLEOTIDE SEQUENCE [LARGE SCALE GENOMIC DNA]</scope>
    <source>
        <strain>630</strain>
    </source>
</reference>